<sequence length="194" mass="21805">MPCLSAYLLMLSSWESSCLRLSQRLRASERYGAAFAPASEDPITLRAPVKGGARNVVGASWCIVCTFKPGVPREDWQLERVTKGILLAKVAPLSTTLEKREDCTGADEISGYSCKERSISSRFKTRQFRRYLPSLKPMRKYCTRSQSSRVNVRFVLSKRPGQRHIASTLSRHSHSPILPSRQVQSICPSNFLGR</sequence>
<organism>
    <name type="scientific">Tomato ringspot virus (isolate raspberry)</name>
    <name type="common">ToRSV</name>
    <dbReference type="NCBI Taxonomy" id="12281"/>
    <lineage>
        <taxon>Viruses</taxon>
        <taxon>Riboviria</taxon>
        <taxon>Orthornavirae</taxon>
        <taxon>Pisuviricota</taxon>
        <taxon>Pisoniviricetes</taxon>
        <taxon>Picornavirales</taxon>
        <taxon>Secoviridae</taxon>
        <taxon>Comovirinae</taxon>
        <taxon>Nepovirus</taxon>
        <taxon>Nepovirus lycopersici</taxon>
    </lineage>
</organism>
<organismHost>
    <name type="scientific">Nicotiana tabacum</name>
    <name type="common">Common tobacco</name>
    <dbReference type="NCBI Taxonomy" id="4097"/>
</organismHost>
<organismHost>
    <name type="scientific">Pelargonium</name>
    <dbReference type="NCBI Taxonomy" id="4030"/>
</organismHost>
<organismHost>
    <name type="scientific">Prunus</name>
    <dbReference type="NCBI Taxonomy" id="3754"/>
</organismHost>
<organismHost>
    <name type="scientific">Rubus</name>
    <name type="common">bramble</name>
    <dbReference type="NCBI Taxonomy" id="23216"/>
</organismHost>
<proteinExistence type="predicted"/>
<name>YR22_TORVR</name>
<keyword id="KW-1185">Reference proteome</keyword>
<reference key="1">
    <citation type="journal article" date="1991" name="J. Gen. Virol.">
        <title>Nucleotide sequence of tomato ringspot virus RNA-2.</title>
        <authorList>
            <person name="Rott M.E."/>
            <person name="Tremaine J.H."/>
            <person name="Rochon D.M."/>
        </authorList>
    </citation>
    <scope>NUCLEOTIDE SEQUENCE [GENOMIC RNA]</scope>
</reference>
<dbReference type="EMBL" id="D12477">
    <property type="protein sequence ID" value="BAA02045.1"/>
    <property type="molecule type" value="Genomic_RNA"/>
</dbReference>
<dbReference type="PIR" id="JQ1095">
    <property type="entry name" value="JQ1095"/>
</dbReference>
<dbReference type="Proteomes" id="UP000000410">
    <property type="component" value="Genome"/>
</dbReference>
<accession>P25246</accession>
<protein>
    <recommendedName>
        <fullName>Uncharacterized protein in RNA2</fullName>
    </recommendedName>
</protein>
<feature type="chain" id="PRO_0000105573" description="Uncharacterized protein in RNA2">
    <location>
        <begin position="1"/>
        <end position="194"/>
    </location>
</feature>